<protein>
    <recommendedName>
        <fullName evidence="1">Endoribonuclease YbeY</fullName>
        <ecNumber evidence="1">3.1.-.-</ecNumber>
    </recommendedName>
</protein>
<evidence type="ECO:0000255" key="1">
    <source>
        <dbReference type="HAMAP-Rule" id="MF_00009"/>
    </source>
</evidence>
<proteinExistence type="inferred from homology"/>
<dbReference type="EC" id="3.1.-.-" evidence="1"/>
<dbReference type="EMBL" id="CP000524">
    <property type="protein sequence ID" value="ABM44555.1"/>
    <property type="molecule type" value="Genomic_DNA"/>
</dbReference>
<dbReference type="RefSeq" id="WP_005767962.1">
    <property type="nucleotide sequence ID" value="NC_008783.1"/>
</dbReference>
<dbReference type="SMR" id="A1UU41"/>
<dbReference type="STRING" id="360095.BARBAKC583_1245"/>
<dbReference type="GeneID" id="4684276"/>
<dbReference type="KEGG" id="bbk:BARBAKC583_1245"/>
<dbReference type="PATRIC" id="fig|360095.6.peg.1221"/>
<dbReference type="eggNOG" id="COG0319">
    <property type="taxonomic scope" value="Bacteria"/>
</dbReference>
<dbReference type="HOGENOM" id="CLU_106710_0_0_5"/>
<dbReference type="OrthoDB" id="9807740at2"/>
<dbReference type="Proteomes" id="UP000000643">
    <property type="component" value="Chromosome"/>
</dbReference>
<dbReference type="GO" id="GO:0005737">
    <property type="term" value="C:cytoplasm"/>
    <property type="evidence" value="ECO:0007669"/>
    <property type="project" value="UniProtKB-SubCell"/>
</dbReference>
<dbReference type="GO" id="GO:0004222">
    <property type="term" value="F:metalloendopeptidase activity"/>
    <property type="evidence" value="ECO:0007669"/>
    <property type="project" value="InterPro"/>
</dbReference>
<dbReference type="GO" id="GO:0004521">
    <property type="term" value="F:RNA endonuclease activity"/>
    <property type="evidence" value="ECO:0007669"/>
    <property type="project" value="UniProtKB-UniRule"/>
</dbReference>
<dbReference type="GO" id="GO:0008270">
    <property type="term" value="F:zinc ion binding"/>
    <property type="evidence" value="ECO:0007669"/>
    <property type="project" value="UniProtKB-UniRule"/>
</dbReference>
<dbReference type="GO" id="GO:0006364">
    <property type="term" value="P:rRNA processing"/>
    <property type="evidence" value="ECO:0007669"/>
    <property type="project" value="UniProtKB-UniRule"/>
</dbReference>
<dbReference type="Gene3D" id="3.40.390.30">
    <property type="entry name" value="Metalloproteases ('zincins'), catalytic domain"/>
    <property type="match status" value="1"/>
</dbReference>
<dbReference type="HAMAP" id="MF_00009">
    <property type="entry name" value="Endoribonucl_YbeY"/>
    <property type="match status" value="1"/>
</dbReference>
<dbReference type="InterPro" id="IPR023091">
    <property type="entry name" value="MetalPrtase_cat_dom_sf_prd"/>
</dbReference>
<dbReference type="InterPro" id="IPR002036">
    <property type="entry name" value="YbeY"/>
</dbReference>
<dbReference type="InterPro" id="IPR020549">
    <property type="entry name" value="YbeY_CS"/>
</dbReference>
<dbReference type="NCBIfam" id="TIGR00043">
    <property type="entry name" value="rRNA maturation RNase YbeY"/>
    <property type="match status" value="1"/>
</dbReference>
<dbReference type="PANTHER" id="PTHR46986">
    <property type="entry name" value="ENDORIBONUCLEASE YBEY, CHLOROPLASTIC"/>
    <property type="match status" value="1"/>
</dbReference>
<dbReference type="PANTHER" id="PTHR46986:SF1">
    <property type="entry name" value="ENDORIBONUCLEASE YBEY, CHLOROPLASTIC"/>
    <property type="match status" value="1"/>
</dbReference>
<dbReference type="Pfam" id="PF02130">
    <property type="entry name" value="YbeY"/>
    <property type="match status" value="1"/>
</dbReference>
<dbReference type="SUPFAM" id="SSF55486">
    <property type="entry name" value="Metalloproteases ('zincins'), catalytic domain"/>
    <property type="match status" value="1"/>
</dbReference>
<dbReference type="PROSITE" id="PS01306">
    <property type="entry name" value="UPF0054"/>
    <property type="match status" value="1"/>
</dbReference>
<gene>
    <name evidence="1" type="primary">ybeY</name>
    <name type="ordered locus">BARBAKC583_1245</name>
</gene>
<name>YBEY_BARBK</name>
<reference key="1">
    <citation type="submission" date="2006-12" db="EMBL/GenBank/DDBJ databases">
        <authorList>
            <person name="Hendrix L."/>
            <person name="Mohamoud Y."/>
            <person name="Radune D."/>
            <person name="Shvartsbeyn A."/>
            <person name="Daugherty S."/>
            <person name="Dodson R."/>
            <person name="Durkin A.S."/>
            <person name="Harkins D."/>
            <person name="Huot H."/>
            <person name="Kothari S.P."/>
            <person name="Madupu R."/>
            <person name="Li J."/>
            <person name="Nelson W.C."/>
            <person name="Shrivastava S."/>
            <person name="Giglio M.G."/>
            <person name="Haft D."/>
            <person name="Selengut J."/>
            <person name="Fraser-Ligget C."/>
            <person name="Seshadri R."/>
        </authorList>
    </citation>
    <scope>NUCLEOTIDE SEQUENCE [LARGE SCALE GENOMIC DNA]</scope>
    <source>
        <strain>ATCC 35685 / KC583 / Herrer 020/F12,63</strain>
    </source>
</reference>
<organism>
    <name type="scientific">Bartonella bacilliformis (strain ATCC 35685 / KC583 / Herrer 020/F12,63)</name>
    <dbReference type="NCBI Taxonomy" id="360095"/>
    <lineage>
        <taxon>Bacteria</taxon>
        <taxon>Pseudomonadati</taxon>
        <taxon>Pseudomonadota</taxon>
        <taxon>Alphaproteobacteria</taxon>
        <taxon>Hyphomicrobiales</taxon>
        <taxon>Bartonellaceae</taxon>
        <taxon>Bartonella</taxon>
    </lineage>
</organism>
<keyword id="KW-0963">Cytoplasm</keyword>
<keyword id="KW-0255">Endonuclease</keyword>
<keyword id="KW-0378">Hydrolase</keyword>
<keyword id="KW-0479">Metal-binding</keyword>
<keyword id="KW-0540">Nuclease</keyword>
<keyword id="KW-0690">Ribosome biogenesis</keyword>
<keyword id="KW-0698">rRNA processing</keyword>
<keyword id="KW-0862">Zinc</keyword>
<comment type="function">
    <text evidence="1">Single strand-specific metallo-endoribonuclease involved in late-stage 70S ribosome quality control and in maturation of the 3' terminus of the 16S rRNA.</text>
</comment>
<comment type="cofactor">
    <cofactor evidence="1">
        <name>Zn(2+)</name>
        <dbReference type="ChEBI" id="CHEBI:29105"/>
    </cofactor>
    <text evidence="1">Binds 1 zinc ion.</text>
</comment>
<comment type="subcellular location">
    <subcellularLocation>
        <location evidence="1">Cytoplasm</location>
    </subcellularLocation>
</comment>
<comment type="similarity">
    <text evidence="1">Belongs to the endoribonuclease YbeY family.</text>
</comment>
<sequence length="158" mass="18098">MISINMTIENAEWGDEKILYTITEKALIATIDRLSLTQVTSELSLLFTNNMRMAQINTQWRNKNKPTNVLSFPAFPLKAGQNPGPMLGDIVLARETIVYEAEEEGKSFHDHLTHMIVHGILHLLGYDHETDDEAYQMEELEKEILQKIAIKNPYTELL</sequence>
<accession>A1UU41</accession>
<feature type="chain" id="PRO_0000284163" description="Endoribonuclease YbeY">
    <location>
        <begin position="1"/>
        <end position="158"/>
    </location>
</feature>
<feature type="binding site" evidence="1">
    <location>
        <position position="118"/>
    </location>
    <ligand>
        <name>Zn(2+)</name>
        <dbReference type="ChEBI" id="CHEBI:29105"/>
        <note>catalytic</note>
    </ligand>
</feature>
<feature type="binding site" evidence="1">
    <location>
        <position position="122"/>
    </location>
    <ligand>
        <name>Zn(2+)</name>
        <dbReference type="ChEBI" id="CHEBI:29105"/>
        <note>catalytic</note>
    </ligand>
</feature>
<feature type="binding site" evidence="1">
    <location>
        <position position="128"/>
    </location>
    <ligand>
        <name>Zn(2+)</name>
        <dbReference type="ChEBI" id="CHEBI:29105"/>
        <note>catalytic</note>
    </ligand>
</feature>